<accession>Q02651</accession>
<accession>D6W3Y6</accession>
<reference key="1">
    <citation type="journal article" date="1997" name="Nature">
        <title>The nucleotide sequence of Saccharomyces cerevisiae chromosome XVI.</title>
        <authorList>
            <person name="Bussey H."/>
            <person name="Storms R.K."/>
            <person name="Ahmed A."/>
            <person name="Albermann K."/>
            <person name="Allen E."/>
            <person name="Ansorge W."/>
            <person name="Araujo R."/>
            <person name="Aparicio A."/>
            <person name="Barrell B.G."/>
            <person name="Badcock K."/>
            <person name="Benes V."/>
            <person name="Botstein D."/>
            <person name="Bowman S."/>
            <person name="Brueckner M."/>
            <person name="Carpenter J."/>
            <person name="Cherry J.M."/>
            <person name="Chung E."/>
            <person name="Churcher C.M."/>
            <person name="Coster F."/>
            <person name="Davis K."/>
            <person name="Davis R.W."/>
            <person name="Dietrich F.S."/>
            <person name="Delius H."/>
            <person name="DiPaolo T."/>
            <person name="Dubois E."/>
            <person name="Duesterhoeft A."/>
            <person name="Duncan M."/>
            <person name="Floeth M."/>
            <person name="Fortin N."/>
            <person name="Friesen J.D."/>
            <person name="Fritz C."/>
            <person name="Goffeau A."/>
            <person name="Hall J."/>
            <person name="Hebling U."/>
            <person name="Heumann K."/>
            <person name="Hilbert H."/>
            <person name="Hillier L.W."/>
            <person name="Hunicke-Smith S."/>
            <person name="Hyman R.W."/>
            <person name="Johnston M."/>
            <person name="Kalman S."/>
            <person name="Kleine K."/>
            <person name="Komp C."/>
            <person name="Kurdi O."/>
            <person name="Lashkari D."/>
            <person name="Lew H."/>
            <person name="Lin A."/>
            <person name="Lin D."/>
            <person name="Louis E.J."/>
            <person name="Marathe R."/>
            <person name="Messenguy F."/>
            <person name="Mewes H.-W."/>
            <person name="Mirtipati S."/>
            <person name="Moestl D."/>
            <person name="Mueller-Auer S."/>
            <person name="Namath A."/>
            <person name="Nentwich U."/>
            <person name="Oefner P."/>
            <person name="Pearson D."/>
            <person name="Petel F.X."/>
            <person name="Pohl T.M."/>
            <person name="Purnelle B."/>
            <person name="Rajandream M.A."/>
            <person name="Rechmann S."/>
            <person name="Rieger M."/>
            <person name="Riles L."/>
            <person name="Roberts D."/>
            <person name="Schaefer M."/>
            <person name="Scharfe M."/>
            <person name="Scherens B."/>
            <person name="Schramm S."/>
            <person name="Schroeder M."/>
            <person name="Sdicu A.-M."/>
            <person name="Tettelin H."/>
            <person name="Urrestarazu L.A."/>
            <person name="Ushinsky S."/>
            <person name="Vierendeels F."/>
            <person name="Vissers S."/>
            <person name="Voss H."/>
            <person name="Walsh S.V."/>
            <person name="Wambutt R."/>
            <person name="Wang Y."/>
            <person name="Wedler E."/>
            <person name="Wedler H."/>
            <person name="Winnett E."/>
            <person name="Zhong W.-W."/>
            <person name="Zollner A."/>
            <person name="Vo D.H."/>
            <person name="Hani J."/>
        </authorList>
    </citation>
    <scope>NUCLEOTIDE SEQUENCE [LARGE SCALE GENOMIC DNA]</scope>
    <source>
        <strain>ATCC 204508 / S288c</strain>
    </source>
</reference>
<reference key="2">
    <citation type="journal article" date="2014" name="G3 (Bethesda)">
        <title>The reference genome sequence of Saccharomyces cerevisiae: Then and now.</title>
        <authorList>
            <person name="Engel S.R."/>
            <person name="Dietrich F.S."/>
            <person name="Fisk D.G."/>
            <person name="Binkley G."/>
            <person name="Balakrishnan R."/>
            <person name="Costanzo M.C."/>
            <person name="Dwight S.S."/>
            <person name="Hitz B.C."/>
            <person name="Karra K."/>
            <person name="Nash R.S."/>
            <person name="Weng S."/>
            <person name="Wong E.D."/>
            <person name="Lloyd P."/>
            <person name="Skrzypek M.S."/>
            <person name="Miyasato S.R."/>
            <person name="Simison M."/>
            <person name="Cherry J.M."/>
        </authorList>
    </citation>
    <scope>GENOME REANNOTATION</scope>
    <source>
        <strain>ATCC 204508 / S288c</strain>
    </source>
</reference>
<reference key="3">
    <citation type="journal article" date="2001" name="Curr. Biol.">
        <title>A screen for genes required for meiosis and spore formation based on whole-genome expression.</title>
        <authorList>
            <person name="Rabitsch K.P."/>
            <person name="Toth A."/>
            <person name="Galova M."/>
            <person name="Schleiffer A."/>
            <person name="Schaffner G."/>
            <person name="Aigner E."/>
            <person name="Rupp C."/>
            <person name="Penkner A.M."/>
            <person name="Moreno-Borchart A.C."/>
            <person name="Primig M."/>
            <person name="Esposito R.E."/>
            <person name="Klein F."/>
            <person name="Knop M."/>
            <person name="Nasmyth K."/>
        </authorList>
    </citation>
    <scope>FUNCTION</scope>
</reference>
<feature type="chain" id="PRO_0000071964" description="Spore membrane assembly protein 1">
    <location>
        <begin position="1"/>
        <end position="245"/>
    </location>
</feature>
<dbReference type="EMBL" id="U36624">
    <property type="protein sequence ID" value="AAB68160.1"/>
    <property type="molecule type" value="Genomic_DNA"/>
</dbReference>
<dbReference type="EMBL" id="BK006949">
    <property type="protein sequence ID" value="DAA11402.1"/>
    <property type="molecule type" value="Genomic_DNA"/>
</dbReference>
<dbReference type="PIR" id="S63455">
    <property type="entry name" value="S63455"/>
</dbReference>
<dbReference type="RefSeq" id="NP_015298.1">
    <property type="nucleotide sequence ID" value="NM_001183841.1"/>
</dbReference>
<dbReference type="BioGRID" id="36151">
    <property type="interactions" value="63"/>
</dbReference>
<dbReference type="DIP" id="DIP-5007N"/>
<dbReference type="FunCoup" id="Q02651">
    <property type="interactions" value="35"/>
</dbReference>
<dbReference type="IntAct" id="Q02651">
    <property type="interactions" value="4"/>
</dbReference>
<dbReference type="MINT" id="Q02651"/>
<dbReference type="PaxDb" id="4932-YPL027W"/>
<dbReference type="EnsemblFungi" id="YPL027W_mRNA">
    <property type="protein sequence ID" value="YPL027W"/>
    <property type="gene ID" value="YPL027W"/>
</dbReference>
<dbReference type="GeneID" id="856080"/>
<dbReference type="KEGG" id="sce:YPL027W"/>
<dbReference type="AGR" id="SGD:S000005948"/>
<dbReference type="SGD" id="S000005948">
    <property type="gene designation" value="SMA1"/>
</dbReference>
<dbReference type="VEuPathDB" id="FungiDB:YPL027W"/>
<dbReference type="HOGENOM" id="CLU_1116283_0_0_1"/>
<dbReference type="InParanoid" id="Q02651"/>
<dbReference type="OMA" id="YRCCERS"/>
<dbReference type="OrthoDB" id="4046324at2759"/>
<dbReference type="BioCyc" id="YEAST:G3O-33943-MONOMER"/>
<dbReference type="BioGRID-ORCS" id="856080">
    <property type="hits" value="0 hits in 10 CRISPR screens"/>
</dbReference>
<dbReference type="PRO" id="PR:Q02651"/>
<dbReference type="Proteomes" id="UP000002311">
    <property type="component" value="Chromosome XVI"/>
</dbReference>
<dbReference type="RNAct" id="Q02651">
    <property type="molecule type" value="protein"/>
</dbReference>
<dbReference type="GO" id="GO:0005628">
    <property type="term" value="C:prospore membrane"/>
    <property type="evidence" value="ECO:0000314"/>
    <property type="project" value="SGD"/>
</dbReference>
<dbReference type="GO" id="GO:0032120">
    <property type="term" value="P:ascospore-type prospore membrane formation"/>
    <property type="evidence" value="ECO:0000315"/>
    <property type="project" value="SGD"/>
</dbReference>
<name>SMA1_YEAST</name>
<protein>
    <recommendedName>
        <fullName>Spore membrane assembly protein 1</fullName>
    </recommendedName>
</protein>
<proteinExistence type="predicted"/>
<comment type="function">
    <text evidence="1">Involved in spore and ascus formation. Required for the efficient assembly of the precursors of the prospore membrane to a continuous prospore membrane.</text>
</comment>
<organism>
    <name type="scientific">Saccharomyces cerevisiae (strain ATCC 204508 / S288c)</name>
    <name type="common">Baker's yeast</name>
    <dbReference type="NCBI Taxonomy" id="559292"/>
    <lineage>
        <taxon>Eukaryota</taxon>
        <taxon>Fungi</taxon>
        <taxon>Dikarya</taxon>
        <taxon>Ascomycota</taxon>
        <taxon>Saccharomycotina</taxon>
        <taxon>Saccharomycetes</taxon>
        <taxon>Saccharomycetales</taxon>
        <taxon>Saccharomycetaceae</taxon>
        <taxon>Saccharomyces</taxon>
    </lineage>
</organism>
<sequence length="245" mass="28399">MACTNDGPNKYPEIVSVKHLFQHSGSKHEFSAGKRFSKSIGKIFKRNSALKTSRTETANHKMELKKREGVTLLPPVPESLLHKLNSWLETFSSTKNMKIEENKIVINEKEIRDSVSYYPDKNGGSAVFCYLPDLVLYYKPPIKVTGKQCPIKRSPWESMEIQYQKFMYPLERLERQFEEVPFRPWYFAMRLKELYRCCERSFTNAANRGKARLLRGKQRTKKSYHKTVNLVSAKISTHSNAPSPG</sequence>
<keyword id="KW-1185">Reference proteome</keyword>
<keyword id="KW-0749">Sporulation</keyword>
<gene>
    <name type="primary">SMA1</name>
    <name type="ordered locus">YPL027W</name>
</gene>
<evidence type="ECO:0000269" key="1">
    <source>
    </source>
</evidence>